<sequence>MTNMRKTHPLFKIINHSFIDLPVPSNISSWWNFGSLLGVCLMVQIITGLFLAMHYTSDTMTAFSSVTHICRDVNYGWLIRYMHANGASMFFICLFLHVGRGLYYGSYTFMETWNIGVLLLFAVMATAFMGYVLPWGQMSFWGATVITNLLSAIPYIGTTLVEWIWGGFSVDKATLTRFFAFHFILPFIIAALAIVHLLFLHETGSNNPTGLNSDADKIPFHPYYTIKDILGILIMFLILMTLVLFFPDMLGDPDNYMPANPLNTPPHIKPEWYFLFAYAILRSIPNKLGGVLALILSILILALMPFLHTSKQRSLMFRPITQILYWILVANLLILTWIGGQPVEHPFIIIGQLASISYFSIILILMPISGIIEDKMLKLYP</sequence>
<keyword id="KW-0249">Electron transport</keyword>
<keyword id="KW-0349">Heme</keyword>
<keyword id="KW-0408">Iron</keyword>
<keyword id="KW-0472">Membrane</keyword>
<keyword id="KW-0479">Metal-binding</keyword>
<keyword id="KW-0496">Mitochondrion</keyword>
<keyword id="KW-0999">Mitochondrion inner membrane</keyword>
<keyword id="KW-0679">Respiratory chain</keyword>
<keyword id="KW-0812">Transmembrane</keyword>
<keyword id="KW-1133">Transmembrane helix</keyword>
<keyword id="KW-0813">Transport</keyword>
<keyword id="KW-0830">Ubiquinone</keyword>
<name>CYB_MUSPO</name>
<dbReference type="EMBL" id="AF159396">
    <property type="protein sequence ID" value="AAD49241.1"/>
    <property type="molecule type" value="Genomic_DNA"/>
</dbReference>
<dbReference type="SMR" id="Q7IY93"/>
<dbReference type="GO" id="GO:0005743">
    <property type="term" value="C:mitochondrial inner membrane"/>
    <property type="evidence" value="ECO:0007669"/>
    <property type="project" value="UniProtKB-SubCell"/>
</dbReference>
<dbReference type="GO" id="GO:0045275">
    <property type="term" value="C:respiratory chain complex III"/>
    <property type="evidence" value="ECO:0007669"/>
    <property type="project" value="InterPro"/>
</dbReference>
<dbReference type="GO" id="GO:0046872">
    <property type="term" value="F:metal ion binding"/>
    <property type="evidence" value="ECO:0007669"/>
    <property type="project" value="UniProtKB-KW"/>
</dbReference>
<dbReference type="GO" id="GO:0008121">
    <property type="term" value="F:ubiquinol-cytochrome-c reductase activity"/>
    <property type="evidence" value="ECO:0007669"/>
    <property type="project" value="InterPro"/>
</dbReference>
<dbReference type="GO" id="GO:0006122">
    <property type="term" value="P:mitochondrial electron transport, ubiquinol to cytochrome c"/>
    <property type="evidence" value="ECO:0007669"/>
    <property type="project" value="TreeGrafter"/>
</dbReference>
<dbReference type="CDD" id="cd00290">
    <property type="entry name" value="cytochrome_b_C"/>
    <property type="match status" value="1"/>
</dbReference>
<dbReference type="CDD" id="cd00284">
    <property type="entry name" value="Cytochrome_b_N"/>
    <property type="match status" value="1"/>
</dbReference>
<dbReference type="FunFam" id="1.20.810.10:FF:000002">
    <property type="entry name" value="Cytochrome b"/>
    <property type="match status" value="1"/>
</dbReference>
<dbReference type="Gene3D" id="1.20.810.10">
    <property type="entry name" value="Cytochrome Bc1 Complex, Chain C"/>
    <property type="match status" value="1"/>
</dbReference>
<dbReference type="InterPro" id="IPR005798">
    <property type="entry name" value="Cyt_b/b6_C"/>
</dbReference>
<dbReference type="InterPro" id="IPR036150">
    <property type="entry name" value="Cyt_b/b6_C_sf"/>
</dbReference>
<dbReference type="InterPro" id="IPR005797">
    <property type="entry name" value="Cyt_b/b6_N"/>
</dbReference>
<dbReference type="InterPro" id="IPR027387">
    <property type="entry name" value="Cytb/b6-like_sf"/>
</dbReference>
<dbReference type="InterPro" id="IPR030689">
    <property type="entry name" value="Cytochrome_b"/>
</dbReference>
<dbReference type="InterPro" id="IPR048260">
    <property type="entry name" value="Cytochrome_b_C_euk/bac"/>
</dbReference>
<dbReference type="InterPro" id="IPR048259">
    <property type="entry name" value="Cytochrome_b_N_euk/bac"/>
</dbReference>
<dbReference type="InterPro" id="IPR016174">
    <property type="entry name" value="Di-haem_cyt_TM"/>
</dbReference>
<dbReference type="PANTHER" id="PTHR19271">
    <property type="entry name" value="CYTOCHROME B"/>
    <property type="match status" value="1"/>
</dbReference>
<dbReference type="PANTHER" id="PTHR19271:SF16">
    <property type="entry name" value="CYTOCHROME B"/>
    <property type="match status" value="1"/>
</dbReference>
<dbReference type="Pfam" id="PF00032">
    <property type="entry name" value="Cytochrom_B_C"/>
    <property type="match status" value="1"/>
</dbReference>
<dbReference type="Pfam" id="PF00033">
    <property type="entry name" value="Cytochrome_B"/>
    <property type="match status" value="1"/>
</dbReference>
<dbReference type="PIRSF" id="PIRSF038885">
    <property type="entry name" value="COB"/>
    <property type="match status" value="1"/>
</dbReference>
<dbReference type="SUPFAM" id="SSF81648">
    <property type="entry name" value="a domain/subunit of cytochrome bc1 complex (Ubiquinol-cytochrome c reductase)"/>
    <property type="match status" value="1"/>
</dbReference>
<dbReference type="SUPFAM" id="SSF81342">
    <property type="entry name" value="Transmembrane di-heme cytochromes"/>
    <property type="match status" value="1"/>
</dbReference>
<dbReference type="PROSITE" id="PS51003">
    <property type="entry name" value="CYTB_CTER"/>
    <property type="match status" value="1"/>
</dbReference>
<dbReference type="PROSITE" id="PS51002">
    <property type="entry name" value="CYTB_NTER"/>
    <property type="match status" value="1"/>
</dbReference>
<geneLocation type="mitochondrion"/>
<accession>Q7IY93</accession>
<feature type="chain" id="PRO_0000255096" description="Cytochrome b">
    <location>
        <begin position="1"/>
        <end position="381"/>
    </location>
</feature>
<feature type="transmembrane region" description="Helical" evidence="2">
    <location>
        <begin position="33"/>
        <end position="53"/>
    </location>
</feature>
<feature type="transmembrane region" description="Helical" evidence="2">
    <location>
        <begin position="77"/>
        <end position="98"/>
    </location>
</feature>
<feature type="transmembrane region" description="Helical" evidence="2">
    <location>
        <begin position="113"/>
        <end position="133"/>
    </location>
</feature>
<feature type="transmembrane region" description="Helical" evidence="2">
    <location>
        <begin position="178"/>
        <end position="198"/>
    </location>
</feature>
<feature type="transmembrane region" description="Helical" evidence="2">
    <location>
        <begin position="226"/>
        <end position="246"/>
    </location>
</feature>
<feature type="transmembrane region" description="Helical" evidence="2">
    <location>
        <begin position="288"/>
        <end position="308"/>
    </location>
</feature>
<feature type="transmembrane region" description="Helical" evidence="2">
    <location>
        <begin position="320"/>
        <end position="340"/>
    </location>
</feature>
<feature type="transmembrane region" description="Helical" evidence="2">
    <location>
        <begin position="347"/>
        <end position="367"/>
    </location>
</feature>
<feature type="binding site" description="axial binding residue" evidence="2">
    <location>
        <position position="83"/>
    </location>
    <ligand>
        <name>heme b</name>
        <dbReference type="ChEBI" id="CHEBI:60344"/>
        <label>b562</label>
    </ligand>
    <ligandPart>
        <name>Fe</name>
        <dbReference type="ChEBI" id="CHEBI:18248"/>
    </ligandPart>
</feature>
<feature type="binding site" description="axial binding residue" evidence="2">
    <location>
        <position position="97"/>
    </location>
    <ligand>
        <name>heme b</name>
        <dbReference type="ChEBI" id="CHEBI:60344"/>
        <label>b566</label>
    </ligand>
    <ligandPart>
        <name>Fe</name>
        <dbReference type="ChEBI" id="CHEBI:18248"/>
    </ligandPart>
</feature>
<feature type="binding site" description="axial binding residue" evidence="2">
    <location>
        <position position="182"/>
    </location>
    <ligand>
        <name>heme b</name>
        <dbReference type="ChEBI" id="CHEBI:60344"/>
        <label>b562</label>
    </ligand>
    <ligandPart>
        <name>Fe</name>
        <dbReference type="ChEBI" id="CHEBI:18248"/>
    </ligandPart>
</feature>
<feature type="binding site" description="axial binding residue" evidence="2">
    <location>
        <position position="196"/>
    </location>
    <ligand>
        <name>heme b</name>
        <dbReference type="ChEBI" id="CHEBI:60344"/>
        <label>b566</label>
    </ligand>
    <ligandPart>
        <name>Fe</name>
        <dbReference type="ChEBI" id="CHEBI:18248"/>
    </ligandPart>
</feature>
<feature type="binding site" evidence="2">
    <location>
        <position position="201"/>
    </location>
    <ligand>
        <name>a ubiquinone</name>
        <dbReference type="ChEBI" id="CHEBI:16389"/>
    </ligand>
</feature>
<gene>
    <name type="primary">MT-CYB</name>
    <name type="synonym">COB</name>
    <name type="synonym">CYTB</name>
    <name type="synonym">MTCYB</name>
</gene>
<comment type="function">
    <text evidence="2">Component of the ubiquinol-cytochrome c reductase complex (complex III or cytochrome b-c1 complex) that is part of the mitochondrial respiratory chain. The b-c1 complex mediates electron transfer from ubiquinol to cytochrome c. Contributes to the generation of a proton gradient across the mitochondrial membrane that is then used for ATP synthesis.</text>
</comment>
<comment type="cofactor">
    <cofactor evidence="2">
        <name>heme b</name>
        <dbReference type="ChEBI" id="CHEBI:60344"/>
    </cofactor>
    <text evidence="2">Binds 2 heme b groups non-covalently.</text>
</comment>
<comment type="subunit">
    <text evidence="2">The cytochrome bc1 complex contains 11 subunits: 3 respiratory subunits (MT-CYB, CYC1 and UQCRFS1), 2 core proteins (UQCRC1 and UQCRC2) and 6 low-molecular weight proteins (UQCRH/QCR6, UQCRB/QCR7, UQCRQ/QCR8, UQCR10/QCR9, UQCR11/QCR10 and a cleavage product of UQCRFS1). This cytochrome bc1 complex then forms a dimer.</text>
</comment>
<comment type="subcellular location">
    <subcellularLocation>
        <location evidence="2">Mitochondrion inner membrane</location>
        <topology evidence="2">Multi-pass membrane protein</topology>
    </subcellularLocation>
</comment>
<comment type="miscellaneous">
    <text evidence="1">Heme 1 (or BL or b562) is low-potential and absorbs at about 562 nm, and heme 2 (or BH or b566) is high-potential and absorbs at about 566 nm.</text>
</comment>
<comment type="similarity">
    <text evidence="3 4">Belongs to the cytochrome b family.</text>
</comment>
<comment type="caution">
    <text evidence="2">The full-length protein contains only eight transmembrane helices, not nine as predicted by bioinformatics tools.</text>
</comment>
<protein>
    <recommendedName>
        <fullName>Cytochrome b</fullName>
    </recommendedName>
    <alternativeName>
        <fullName>Complex III subunit 3</fullName>
    </alternativeName>
    <alternativeName>
        <fullName>Complex III subunit III</fullName>
    </alternativeName>
    <alternativeName>
        <fullName>Cytochrome b-c1 complex subunit 3</fullName>
    </alternativeName>
    <alternativeName>
        <fullName>Ubiquinol-cytochrome-c reductase complex cytochrome b subunit</fullName>
    </alternativeName>
</protein>
<organism>
    <name type="scientific">Mus poschiavinus</name>
    <name type="common">Tobacco mouse</name>
    <dbReference type="NCBI Taxonomy" id="100383"/>
    <lineage>
        <taxon>Eukaryota</taxon>
        <taxon>Metazoa</taxon>
        <taxon>Chordata</taxon>
        <taxon>Craniata</taxon>
        <taxon>Vertebrata</taxon>
        <taxon>Euteleostomi</taxon>
        <taxon>Mammalia</taxon>
        <taxon>Eutheria</taxon>
        <taxon>Euarchontoglires</taxon>
        <taxon>Glires</taxon>
        <taxon>Rodentia</taxon>
        <taxon>Myomorpha</taxon>
        <taxon>Muroidea</taxon>
        <taxon>Muridae</taxon>
        <taxon>Murinae</taxon>
        <taxon>Mus</taxon>
        <taxon>Mus</taxon>
    </lineage>
</organism>
<evidence type="ECO:0000250" key="1"/>
<evidence type="ECO:0000250" key="2">
    <source>
        <dbReference type="UniProtKB" id="P00157"/>
    </source>
</evidence>
<evidence type="ECO:0000255" key="3">
    <source>
        <dbReference type="PROSITE-ProRule" id="PRU00967"/>
    </source>
</evidence>
<evidence type="ECO:0000255" key="4">
    <source>
        <dbReference type="PROSITE-ProRule" id="PRU00968"/>
    </source>
</evidence>
<proteinExistence type="inferred from homology"/>
<reference key="1">
    <citation type="journal article" date="2000" name="Mol. Phylogenet. Evol.">
        <title>Molecular phylogeny of European muroid rodents based on complete cytochrome b sequences.</title>
        <authorList>
            <person name="Martin Y."/>
            <person name="Gerlach G."/>
            <person name="Schlotterer C."/>
            <person name="Meyer A."/>
        </authorList>
    </citation>
    <scope>NUCLEOTIDE SEQUENCE [GENOMIC DNA]</scope>
</reference>